<comment type="function">
    <text evidence="1">Plays a critical role in the incorporation of lipoproteins in the outer membrane after they are released by the LolA protein.</text>
</comment>
<comment type="subunit">
    <text evidence="1">Monomer.</text>
</comment>
<comment type="subcellular location">
    <subcellularLocation>
        <location evidence="1">Cell outer membrane</location>
        <topology evidence="1">Lipid-anchor</topology>
    </subcellularLocation>
</comment>
<comment type="similarity">
    <text evidence="1">Belongs to the LolB family.</text>
</comment>
<comment type="sequence caution" evidence="2">
    <conflict type="erroneous initiation">
        <sequence resource="EMBL-CDS" id="AAM85851"/>
    </conflict>
</comment>
<reference key="1">
    <citation type="journal article" date="2001" name="Nature">
        <title>Genome sequence of Yersinia pestis, the causative agent of plague.</title>
        <authorList>
            <person name="Parkhill J."/>
            <person name="Wren B.W."/>
            <person name="Thomson N.R."/>
            <person name="Titball R.W."/>
            <person name="Holden M.T.G."/>
            <person name="Prentice M.B."/>
            <person name="Sebaihia M."/>
            <person name="James K.D."/>
            <person name="Churcher C.M."/>
            <person name="Mungall K.L."/>
            <person name="Baker S."/>
            <person name="Basham D."/>
            <person name="Bentley S.D."/>
            <person name="Brooks K."/>
            <person name="Cerdeno-Tarraga A.-M."/>
            <person name="Chillingworth T."/>
            <person name="Cronin A."/>
            <person name="Davies R.M."/>
            <person name="Davis P."/>
            <person name="Dougan G."/>
            <person name="Feltwell T."/>
            <person name="Hamlin N."/>
            <person name="Holroyd S."/>
            <person name="Jagels K."/>
            <person name="Karlyshev A.V."/>
            <person name="Leather S."/>
            <person name="Moule S."/>
            <person name="Oyston P.C.F."/>
            <person name="Quail M.A."/>
            <person name="Rutherford K.M."/>
            <person name="Simmonds M."/>
            <person name="Skelton J."/>
            <person name="Stevens K."/>
            <person name="Whitehead S."/>
            <person name="Barrell B.G."/>
        </authorList>
    </citation>
    <scope>NUCLEOTIDE SEQUENCE [LARGE SCALE GENOMIC DNA]</scope>
    <source>
        <strain>CO-92 / Biovar Orientalis</strain>
    </source>
</reference>
<reference key="2">
    <citation type="journal article" date="2002" name="J. Bacteriol.">
        <title>Genome sequence of Yersinia pestis KIM.</title>
        <authorList>
            <person name="Deng W."/>
            <person name="Burland V."/>
            <person name="Plunkett G. III"/>
            <person name="Boutin A."/>
            <person name="Mayhew G.F."/>
            <person name="Liss P."/>
            <person name="Perna N.T."/>
            <person name="Rose D.J."/>
            <person name="Mau B."/>
            <person name="Zhou S."/>
            <person name="Schwartz D.C."/>
            <person name="Fetherston J.D."/>
            <person name="Lindler L.E."/>
            <person name="Brubaker R.R."/>
            <person name="Plano G.V."/>
            <person name="Straley S.C."/>
            <person name="McDonough K.A."/>
            <person name="Nilles M.L."/>
            <person name="Matson J.S."/>
            <person name="Blattner F.R."/>
            <person name="Perry R.D."/>
        </authorList>
    </citation>
    <scope>NUCLEOTIDE SEQUENCE [LARGE SCALE GENOMIC DNA]</scope>
    <source>
        <strain>KIM10+ / Biovar Mediaevalis</strain>
    </source>
</reference>
<reference key="3">
    <citation type="journal article" date="2004" name="DNA Res.">
        <title>Complete genome sequence of Yersinia pestis strain 91001, an isolate avirulent to humans.</title>
        <authorList>
            <person name="Song Y."/>
            <person name="Tong Z."/>
            <person name="Wang J."/>
            <person name="Wang L."/>
            <person name="Guo Z."/>
            <person name="Han Y."/>
            <person name="Zhang J."/>
            <person name="Pei D."/>
            <person name="Zhou D."/>
            <person name="Qin H."/>
            <person name="Pang X."/>
            <person name="Han Y."/>
            <person name="Zhai J."/>
            <person name="Li M."/>
            <person name="Cui B."/>
            <person name="Qi Z."/>
            <person name="Jin L."/>
            <person name="Dai R."/>
            <person name="Chen F."/>
            <person name="Li S."/>
            <person name="Ye C."/>
            <person name="Du Z."/>
            <person name="Lin W."/>
            <person name="Wang J."/>
            <person name="Yu J."/>
            <person name="Yang H."/>
            <person name="Wang J."/>
            <person name="Huang P."/>
            <person name="Yang R."/>
        </authorList>
    </citation>
    <scope>NUCLEOTIDE SEQUENCE [LARGE SCALE GENOMIC DNA]</scope>
    <source>
        <strain>91001 / Biovar Mediaevalis</strain>
    </source>
</reference>
<dbReference type="EMBL" id="AL590842">
    <property type="protein sequence ID" value="CAL20652.1"/>
    <property type="molecule type" value="Genomic_DNA"/>
</dbReference>
<dbReference type="EMBL" id="AE009952">
    <property type="protein sequence ID" value="AAM85851.1"/>
    <property type="status" value="ALT_INIT"/>
    <property type="molecule type" value="Genomic_DNA"/>
</dbReference>
<dbReference type="EMBL" id="AE017042">
    <property type="protein sequence ID" value="AAS62083.1"/>
    <property type="molecule type" value="Genomic_DNA"/>
</dbReference>
<dbReference type="PIR" id="AI0245">
    <property type="entry name" value="AI0245"/>
</dbReference>
<dbReference type="RefSeq" id="WP_002224468.1">
    <property type="nucleotide sequence ID" value="NZ_WUCM01000039.1"/>
</dbReference>
<dbReference type="RefSeq" id="YP_002347001.1">
    <property type="nucleotide sequence ID" value="NC_003143.1"/>
</dbReference>
<dbReference type="SMR" id="Q8ZEY0"/>
<dbReference type="STRING" id="214092.YPO2015"/>
<dbReference type="PaxDb" id="214092-YPO2015"/>
<dbReference type="DNASU" id="1147239"/>
<dbReference type="EnsemblBacteria" id="AAS62083">
    <property type="protein sequence ID" value="AAS62083"/>
    <property type="gene ID" value="YP_1863"/>
</dbReference>
<dbReference type="GeneID" id="57976646"/>
<dbReference type="KEGG" id="ype:YPO2015"/>
<dbReference type="KEGG" id="ypk:y2292"/>
<dbReference type="KEGG" id="ypm:YP_1863"/>
<dbReference type="PATRIC" id="fig|214092.21.peg.2400"/>
<dbReference type="eggNOG" id="COG3017">
    <property type="taxonomic scope" value="Bacteria"/>
</dbReference>
<dbReference type="HOGENOM" id="CLU_092816_1_1_6"/>
<dbReference type="OrthoDB" id="9797618at2"/>
<dbReference type="Proteomes" id="UP000000815">
    <property type="component" value="Chromosome"/>
</dbReference>
<dbReference type="Proteomes" id="UP000001019">
    <property type="component" value="Chromosome"/>
</dbReference>
<dbReference type="Proteomes" id="UP000002490">
    <property type="component" value="Chromosome"/>
</dbReference>
<dbReference type="GO" id="GO:0009279">
    <property type="term" value="C:cell outer membrane"/>
    <property type="evidence" value="ECO:0007669"/>
    <property type="project" value="UniProtKB-SubCell"/>
</dbReference>
<dbReference type="GO" id="GO:0044874">
    <property type="term" value="P:lipoprotein localization to outer membrane"/>
    <property type="evidence" value="ECO:0007669"/>
    <property type="project" value="UniProtKB-UniRule"/>
</dbReference>
<dbReference type="GO" id="GO:0015031">
    <property type="term" value="P:protein transport"/>
    <property type="evidence" value="ECO:0007669"/>
    <property type="project" value="UniProtKB-KW"/>
</dbReference>
<dbReference type="CDD" id="cd16326">
    <property type="entry name" value="LolB"/>
    <property type="match status" value="1"/>
</dbReference>
<dbReference type="Gene3D" id="2.50.20.10">
    <property type="entry name" value="Lipoprotein localisation LolA/LolB/LppX"/>
    <property type="match status" value="1"/>
</dbReference>
<dbReference type="HAMAP" id="MF_00233">
    <property type="entry name" value="LolB"/>
    <property type="match status" value="1"/>
</dbReference>
<dbReference type="InterPro" id="IPR029046">
    <property type="entry name" value="LolA/LolB/LppX"/>
</dbReference>
<dbReference type="InterPro" id="IPR004565">
    <property type="entry name" value="OM_lipoprot_LolB"/>
</dbReference>
<dbReference type="NCBIfam" id="TIGR00548">
    <property type="entry name" value="lolB"/>
    <property type="match status" value="1"/>
</dbReference>
<dbReference type="Pfam" id="PF03550">
    <property type="entry name" value="LolB"/>
    <property type="match status" value="1"/>
</dbReference>
<dbReference type="SUPFAM" id="SSF89392">
    <property type="entry name" value="Prokaryotic lipoproteins and lipoprotein localization factors"/>
    <property type="match status" value="1"/>
</dbReference>
<dbReference type="PROSITE" id="PS51257">
    <property type="entry name" value="PROKAR_LIPOPROTEIN"/>
    <property type="match status" value="1"/>
</dbReference>
<sequence length="207" mass="23981">MPMRKRHFYRLLPLASLLLAACTIPVSKGPATSPTSPQWRQHEQQLQQLGQFETRGAFAYLSDKQKVYARFFWQQTSPERYRLLLTNPLGSTELELVVQPGVTQLTDNQGKRYVSDDPQEMIQKLTGMSIPLESLRQWILGLPGDTSDFTLDDKYRLKKLTYQQNGVTWVVDYQEYNTQVTPSLPSRLELNQDGQRIKLKMDSWTIK</sequence>
<keyword id="KW-0998">Cell outer membrane</keyword>
<keyword id="KW-0143">Chaperone</keyword>
<keyword id="KW-0449">Lipoprotein</keyword>
<keyword id="KW-0472">Membrane</keyword>
<keyword id="KW-0564">Palmitate</keyword>
<keyword id="KW-0653">Protein transport</keyword>
<keyword id="KW-1185">Reference proteome</keyword>
<keyword id="KW-0732">Signal</keyword>
<keyword id="KW-0813">Transport</keyword>
<feature type="signal peptide" evidence="1">
    <location>
        <begin position="1"/>
        <end position="21"/>
    </location>
</feature>
<feature type="chain" id="PRO_0000018322" description="Outer-membrane lipoprotein LolB">
    <location>
        <begin position="22"/>
        <end position="207"/>
    </location>
</feature>
<feature type="lipid moiety-binding region" description="N-palmitoyl cysteine" evidence="1">
    <location>
        <position position="22"/>
    </location>
</feature>
<feature type="lipid moiety-binding region" description="S-diacylglycerol cysteine" evidence="1">
    <location>
        <position position="22"/>
    </location>
</feature>
<evidence type="ECO:0000255" key="1">
    <source>
        <dbReference type="HAMAP-Rule" id="MF_00233"/>
    </source>
</evidence>
<evidence type="ECO:0000305" key="2"/>
<proteinExistence type="inferred from homology"/>
<accession>Q8ZEY0</accession>
<accession>Q0WFD7</accession>
<name>LOLB_YERPE</name>
<protein>
    <recommendedName>
        <fullName evidence="1">Outer-membrane lipoprotein LolB</fullName>
    </recommendedName>
</protein>
<organism>
    <name type="scientific">Yersinia pestis</name>
    <dbReference type="NCBI Taxonomy" id="632"/>
    <lineage>
        <taxon>Bacteria</taxon>
        <taxon>Pseudomonadati</taxon>
        <taxon>Pseudomonadota</taxon>
        <taxon>Gammaproteobacteria</taxon>
        <taxon>Enterobacterales</taxon>
        <taxon>Yersiniaceae</taxon>
        <taxon>Yersinia</taxon>
    </lineage>
</organism>
<gene>
    <name evidence="1" type="primary">lolB</name>
    <name type="synonym">hemM</name>
    <name type="ordered locus">YPO2015</name>
    <name type="ordered locus">y2292</name>
    <name type="ordered locus">YP_1863</name>
</gene>